<keyword id="KW-0028">Amino-acid biosynthesis</keyword>
<keyword id="KW-0067">ATP-binding</keyword>
<keyword id="KW-0963">Cytoplasm</keyword>
<keyword id="KW-0368">Histidine biosynthesis</keyword>
<keyword id="KW-0378">Hydrolase</keyword>
<keyword id="KW-0547">Nucleotide-binding</keyword>
<dbReference type="EC" id="3.6.1.31" evidence="1"/>
<dbReference type="EMBL" id="CP000151">
    <property type="protein sequence ID" value="ABB07133.1"/>
    <property type="molecule type" value="Genomic_DNA"/>
</dbReference>
<dbReference type="RefSeq" id="WP_006485344.1">
    <property type="nucleotide sequence ID" value="NZ_WNDV01000034.1"/>
</dbReference>
<dbReference type="SMR" id="Q39K83"/>
<dbReference type="KEGG" id="bur:Bcep18194_A3531"/>
<dbReference type="HOGENOM" id="CLU_123337_1_2_4"/>
<dbReference type="UniPathway" id="UPA00031">
    <property type="reaction ID" value="UER00007"/>
</dbReference>
<dbReference type="Proteomes" id="UP000002705">
    <property type="component" value="Chromosome 1"/>
</dbReference>
<dbReference type="GO" id="GO:0005737">
    <property type="term" value="C:cytoplasm"/>
    <property type="evidence" value="ECO:0007669"/>
    <property type="project" value="UniProtKB-SubCell"/>
</dbReference>
<dbReference type="GO" id="GO:0005524">
    <property type="term" value="F:ATP binding"/>
    <property type="evidence" value="ECO:0007669"/>
    <property type="project" value="UniProtKB-KW"/>
</dbReference>
<dbReference type="GO" id="GO:0004636">
    <property type="term" value="F:phosphoribosyl-ATP diphosphatase activity"/>
    <property type="evidence" value="ECO:0007669"/>
    <property type="project" value="UniProtKB-UniRule"/>
</dbReference>
<dbReference type="GO" id="GO:0000105">
    <property type="term" value="P:L-histidine biosynthetic process"/>
    <property type="evidence" value="ECO:0007669"/>
    <property type="project" value="UniProtKB-UniRule"/>
</dbReference>
<dbReference type="CDD" id="cd11534">
    <property type="entry name" value="NTP-PPase_HisIE_like"/>
    <property type="match status" value="1"/>
</dbReference>
<dbReference type="Gene3D" id="1.10.287.1080">
    <property type="entry name" value="MazG-like"/>
    <property type="match status" value="1"/>
</dbReference>
<dbReference type="HAMAP" id="MF_01020">
    <property type="entry name" value="HisE"/>
    <property type="match status" value="1"/>
</dbReference>
<dbReference type="InterPro" id="IPR008179">
    <property type="entry name" value="HisE"/>
</dbReference>
<dbReference type="InterPro" id="IPR021130">
    <property type="entry name" value="PRib-ATP_PPHydrolase-like"/>
</dbReference>
<dbReference type="NCBIfam" id="TIGR03188">
    <property type="entry name" value="histidine_hisI"/>
    <property type="match status" value="1"/>
</dbReference>
<dbReference type="NCBIfam" id="NF001611">
    <property type="entry name" value="PRK00400.1-3"/>
    <property type="match status" value="1"/>
</dbReference>
<dbReference type="PANTHER" id="PTHR42945">
    <property type="entry name" value="HISTIDINE BIOSYNTHESIS BIFUNCTIONAL PROTEIN"/>
    <property type="match status" value="1"/>
</dbReference>
<dbReference type="PANTHER" id="PTHR42945:SF9">
    <property type="entry name" value="HISTIDINE BIOSYNTHESIS BIFUNCTIONAL PROTEIN HISIE"/>
    <property type="match status" value="1"/>
</dbReference>
<dbReference type="Pfam" id="PF01503">
    <property type="entry name" value="PRA-PH"/>
    <property type="match status" value="1"/>
</dbReference>
<dbReference type="SUPFAM" id="SSF101386">
    <property type="entry name" value="all-alpha NTP pyrophosphatases"/>
    <property type="match status" value="1"/>
</dbReference>
<sequence length="121" mass="13288">MTQSTEDTLLRLAAVIDSRKGGDPDQSYVSRLFHKGDDAVLKKIGEEATEVVLAAKDVRQGGAPTALVGEVADLWFHCLVMLSHFDLSPADVIAELERREGLSGIEEKALRKRREREENGG</sequence>
<accession>Q39K83</accession>
<reference key="1">
    <citation type="submission" date="2005-10" db="EMBL/GenBank/DDBJ databases">
        <title>Complete sequence of chromosome 1 of Burkholderia sp. 383.</title>
        <authorList>
            <consortium name="US DOE Joint Genome Institute"/>
            <person name="Copeland A."/>
            <person name="Lucas S."/>
            <person name="Lapidus A."/>
            <person name="Barry K."/>
            <person name="Detter J.C."/>
            <person name="Glavina T."/>
            <person name="Hammon N."/>
            <person name="Israni S."/>
            <person name="Pitluck S."/>
            <person name="Chain P."/>
            <person name="Malfatti S."/>
            <person name="Shin M."/>
            <person name="Vergez L."/>
            <person name="Schmutz J."/>
            <person name="Larimer F."/>
            <person name="Land M."/>
            <person name="Kyrpides N."/>
            <person name="Lykidis A."/>
            <person name="Richardson P."/>
        </authorList>
    </citation>
    <scope>NUCLEOTIDE SEQUENCE [LARGE SCALE GENOMIC DNA]</scope>
    <source>
        <strain>ATCC 17760 / DSM 23089 / LMG 22485 / NCIMB 9086 / R18194 / 383</strain>
    </source>
</reference>
<feature type="chain" id="PRO_0000230173" description="Phosphoribosyl-ATP pyrophosphatase">
    <location>
        <begin position="1"/>
        <end position="121"/>
    </location>
</feature>
<organism>
    <name type="scientific">Burkholderia lata (strain ATCC 17760 / DSM 23089 / LMG 22485 / NCIMB 9086 / R18194 / 383)</name>
    <dbReference type="NCBI Taxonomy" id="482957"/>
    <lineage>
        <taxon>Bacteria</taxon>
        <taxon>Pseudomonadati</taxon>
        <taxon>Pseudomonadota</taxon>
        <taxon>Betaproteobacteria</taxon>
        <taxon>Burkholderiales</taxon>
        <taxon>Burkholderiaceae</taxon>
        <taxon>Burkholderia</taxon>
        <taxon>Burkholderia cepacia complex</taxon>
    </lineage>
</organism>
<proteinExistence type="inferred from homology"/>
<name>HIS2_BURL3</name>
<gene>
    <name evidence="1" type="primary">hisE</name>
    <name type="ordered locus">Bcep18194_A3531</name>
</gene>
<comment type="catalytic activity">
    <reaction evidence="1">
        <text>1-(5-phospho-beta-D-ribosyl)-ATP + H2O = 1-(5-phospho-beta-D-ribosyl)-5'-AMP + diphosphate + H(+)</text>
        <dbReference type="Rhea" id="RHEA:22828"/>
        <dbReference type="ChEBI" id="CHEBI:15377"/>
        <dbReference type="ChEBI" id="CHEBI:15378"/>
        <dbReference type="ChEBI" id="CHEBI:33019"/>
        <dbReference type="ChEBI" id="CHEBI:59457"/>
        <dbReference type="ChEBI" id="CHEBI:73183"/>
        <dbReference type="EC" id="3.6.1.31"/>
    </reaction>
</comment>
<comment type="pathway">
    <text evidence="1">Amino-acid biosynthesis; L-histidine biosynthesis; L-histidine from 5-phospho-alpha-D-ribose 1-diphosphate: step 2/9.</text>
</comment>
<comment type="subcellular location">
    <subcellularLocation>
        <location evidence="1">Cytoplasm</location>
    </subcellularLocation>
</comment>
<comment type="similarity">
    <text evidence="1">Belongs to the PRA-PH family.</text>
</comment>
<evidence type="ECO:0000255" key="1">
    <source>
        <dbReference type="HAMAP-Rule" id="MF_01020"/>
    </source>
</evidence>
<protein>
    <recommendedName>
        <fullName evidence="1">Phosphoribosyl-ATP pyrophosphatase</fullName>
        <shortName evidence="1">PRA-PH</shortName>
        <ecNumber evidence="1">3.6.1.31</ecNumber>
    </recommendedName>
</protein>